<name>MP17L_MOUSE</name>
<reference key="1">
    <citation type="journal article" date="2001" name="Biochem. Biophys. Res. Commun.">
        <title>Cloning, mapping, genomic organization, and expression of mouse M-LP, a new member of the peroxisomal membrane protein Mpv17 domain family.</title>
        <authorList>
            <person name="Iida R."/>
            <person name="Yasuda T."/>
            <person name="Tsubota E."/>
            <person name="Matsuki T."/>
            <person name="Kishi K."/>
        </authorList>
    </citation>
    <scope>NUCLEOTIDE SEQUENCE [MRNA] (ISOFORM 1)</scope>
    <scope>TISSUE SPECIFICITY</scope>
    <source>
        <strain>C57BL/6J</strain>
    </source>
</reference>
<reference key="2">
    <citation type="journal article" date="2005" name="Exp. Cell Res.">
        <title>A novel alternative spliced Mpv17-like protein isoform localizes in cytosol and is expressed in a kidney- and adult-specific manner.</title>
        <authorList>
            <person name="Iida R."/>
            <person name="Yasuda T."/>
            <person name="Tsubota E."/>
            <person name="Takatsuka H."/>
            <person name="Masuyama M."/>
            <person name="Matsuki T."/>
            <person name="Kishi K."/>
        </authorList>
    </citation>
    <scope>NUCLEOTIDE SEQUENCE [MRNA] (ISOFORM 3)</scope>
    <scope>FUNCTION</scope>
    <scope>TOPOLOGY</scope>
    <scope>SUBCELLULAR LOCATION</scope>
    <scope>TISSUE SPECIFICITY</scope>
    <source>
        <strain>C57BL/6J</strain>
    </source>
</reference>
<reference key="3">
    <citation type="journal article" date="2005" name="Science">
        <title>The transcriptional landscape of the mammalian genome.</title>
        <authorList>
            <person name="Carninci P."/>
            <person name="Kasukawa T."/>
            <person name="Katayama S."/>
            <person name="Gough J."/>
            <person name="Frith M.C."/>
            <person name="Maeda N."/>
            <person name="Oyama R."/>
            <person name="Ravasi T."/>
            <person name="Lenhard B."/>
            <person name="Wells C."/>
            <person name="Kodzius R."/>
            <person name="Shimokawa K."/>
            <person name="Bajic V.B."/>
            <person name="Brenner S.E."/>
            <person name="Batalov S."/>
            <person name="Forrest A.R."/>
            <person name="Zavolan M."/>
            <person name="Davis M.J."/>
            <person name="Wilming L.G."/>
            <person name="Aidinis V."/>
            <person name="Allen J.E."/>
            <person name="Ambesi-Impiombato A."/>
            <person name="Apweiler R."/>
            <person name="Aturaliya R.N."/>
            <person name="Bailey T.L."/>
            <person name="Bansal M."/>
            <person name="Baxter L."/>
            <person name="Beisel K.W."/>
            <person name="Bersano T."/>
            <person name="Bono H."/>
            <person name="Chalk A.M."/>
            <person name="Chiu K.P."/>
            <person name="Choudhary V."/>
            <person name="Christoffels A."/>
            <person name="Clutterbuck D.R."/>
            <person name="Crowe M.L."/>
            <person name="Dalla E."/>
            <person name="Dalrymple B.P."/>
            <person name="de Bono B."/>
            <person name="Della Gatta G."/>
            <person name="di Bernardo D."/>
            <person name="Down T."/>
            <person name="Engstrom P."/>
            <person name="Fagiolini M."/>
            <person name="Faulkner G."/>
            <person name="Fletcher C.F."/>
            <person name="Fukushima T."/>
            <person name="Furuno M."/>
            <person name="Futaki S."/>
            <person name="Gariboldi M."/>
            <person name="Georgii-Hemming P."/>
            <person name="Gingeras T.R."/>
            <person name="Gojobori T."/>
            <person name="Green R.E."/>
            <person name="Gustincich S."/>
            <person name="Harbers M."/>
            <person name="Hayashi Y."/>
            <person name="Hensch T.K."/>
            <person name="Hirokawa N."/>
            <person name="Hill D."/>
            <person name="Huminiecki L."/>
            <person name="Iacono M."/>
            <person name="Ikeo K."/>
            <person name="Iwama A."/>
            <person name="Ishikawa T."/>
            <person name="Jakt M."/>
            <person name="Kanapin A."/>
            <person name="Katoh M."/>
            <person name="Kawasawa Y."/>
            <person name="Kelso J."/>
            <person name="Kitamura H."/>
            <person name="Kitano H."/>
            <person name="Kollias G."/>
            <person name="Krishnan S.P."/>
            <person name="Kruger A."/>
            <person name="Kummerfeld S.K."/>
            <person name="Kurochkin I.V."/>
            <person name="Lareau L.F."/>
            <person name="Lazarevic D."/>
            <person name="Lipovich L."/>
            <person name="Liu J."/>
            <person name="Liuni S."/>
            <person name="McWilliam S."/>
            <person name="Madan Babu M."/>
            <person name="Madera M."/>
            <person name="Marchionni L."/>
            <person name="Matsuda H."/>
            <person name="Matsuzawa S."/>
            <person name="Miki H."/>
            <person name="Mignone F."/>
            <person name="Miyake S."/>
            <person name="Morris K."/>
            <person name="Mottagui-Tabar S."/>
            <person name="Mulder N."/>
            <person name="Nakano N."/>
            <person name="Nakauchi H."/>
            <person name="Ng P."/>
            <person name="Nilsson R."/>
            <person name="Nishiguchi S."/>
            <person name="Nishikawa S."/>
            <person name="Nori F."/>
            <person name="Ohara O."/>
            <person name="Okazaki Y."/>
            <person name="Orlando V."/>
            <person name="Pang K.C."/>
            <person name="Pavan W.J."/>
            <person name="Pavesi G."/>
            <person name="Pesole G."/>
            <person name="Petrovsky N."/>
            <person name="Piazza S."/>
            <person name="Reed J."/>
            <person name="Reid J.F."/>
            <person name="Ring B.Z."/>
            <person name="Ringwald M."/>
            <person name="Rost B."/>
            <person name="Ruan Y."/>
            <person name="Salzberg S.L."/>
            <person name="Sandelin A."/>
            <person name="Schneider C."/>
            <person name="Schoenbach C."/>
            <person name="Sekiguchi K."/>
            <person name="Semple C.A."/>
            <person name="Seno S."/>
            <person name="Sessa L."/>
            <person name="Sheng Y."/>
            <person name="Shibata Y."/>
            <person name="Shimada H."/>
            <person name="Shimada K."/>
            <person name="Silva D."/>
            <person name="Sinclair B."/>
            <person name="Sperling S."/>
            <person name="Stupka E."/>
            <person name="Sugiura K."/>
            <person name="Sultana R."/>
            <person name="Takenaka Y."/>
            <person name="Taki K."/>
            <person name="Tammoja K."/>
            <person name="Tan S.L."/>
            <person name="Tang S."/>
            <person name="Taylor M.S."/>
            <person name="Tegner J."/>
            <person name="Teichmann S.A."/>
            <person name="Ueda H.R."/>
            <person name="van Nimwegen E."/>
            <person name="Verardo R."/>
            <person name="Wei C.L."/>
            <person name="Yagi K."/>
            <person name="Yamanishi H."/>
            <person name="Zabarovsky E."/>
            <person name="Zhu S."/>
            <person name="Zimmer A."/>
            <person name="Hide W."/>
            <person name="Bult C."/>
            <person name="Grimmond S.M."/>
            <person name="Teasdale R.D."/>
            <person name="Liu E.T."/>
            <person name="Brusic V."/>
            <person name="Quackenbush J."/>
            <person name="Wahlestedt C."/>
            <person name="Mattick J.S."/>
            <person name="Hume D.A."/>
            <person name="Kai C."/>
            <person name="Sasaki D."/>
            <person name="Tomaru Y."/>
            <person name="Fukuda S."/>
            <person name="Kanamori-Katayama M."/>
            <person name="Suzuki M."/>
            <person name="Aoki J."/>
            <person name="Arakawa T."/>
            <person name="Iida J."/>
            <person name="Imamura K."/>
            <person name="Itoh M."/>
            <person name="Kato T."/>
            <person name="Kawaji H."/>
            <person name="Kawagashira N."/>
            <person name="Kawashima T."/>
            <person name="Kojima M."/>
            <person name="Kondo S."/>
            <person name="Konno H."/>
            <person name="Nakano K."/>
            <person name="Ninomiya N."/>
            <person name="Nishio T."/>
            <person name="Okada M."/>
            <person name="Plessy C."/>
            <person name="Shibata K."/>
            <person name="Shiraki T."/>
            <person name="Suzuki S."/>
            <person name="Tagami M."/>
            <person name="Waki K."/>
            <person name="Watahiki A."/>
            <person name="Okamura-Oho Y."/>
            <person name="Suzuki H."/>
            <person name="Kawai J."/>
            <person name="Hayashizaki Y."/>
        </authorList>
    </citation>
    <scope>NUCLEOTIDE SEQUENCE [LARGE SCALE MRNA] (ISOFORMS 2 AND 3)</scope>
    <source>
        <strain>C57BL/6J</strain>
        <tissue>Brain cortex</tissue>
        <tissue>Colon</tissue>
    </source>
</reference>
<reference key="4">
    <citation type="journal article" date="2004" name="Genome Res.">
        <title>The status, quality, and expansion of the NIH full-length cDNA project: the Mammalian Gene Collection (MGC).</title>
        <authorList>
            <consortium name="The MGC Project Team"/>
        </authorList>
    </citation>
    <scope>NUCLEOTIDE SEQUENCE [LARGE SCALE MRNA] (ISOFORMS 1 AND 3)</scope>
    <source>
        <strain>FVB/N</strain>
        <tissue>Kidney</tissue>
    </source>
</reference>
<reference key="5">
    <citation type="journal article" date="2003" name="J. Biol. Chem.">
        <title>M-LP, Mpv17-like protein, has a peroxisomal membrane targeting signal comprising a transmembrane domain and a positively charged loop and up-regulates expression of the manganese superoxide dismutase gene.</title>
        <authorList>
            <person name="Iida R."/>
            <person name="Yasuda T."/>
            <person name="Tsubota E."/>
            <person name="Takatsuka H."/>
            <person name="Masuyama M."/>
            <person name="Matsuki T."/>
            <person name="Kishi K."/>
        </authorList>
    </citation>
    <scope>FUNCTION</scope>
    <scope>SUBCELLULAR LOCATION</scope>
    <scope>TISSUE SPECIFICITY</scope>
</reference>
<reference key="6">
    <citation type="journal article" date="2010" name="Mol. Cell. Biol.">
        <title>A novel transcriptional repressor, Rhit, is involved in heat-inducible and age-dependent expression of Mpv17-like protein, a participant in reactive oxygen species metabolism.</title>
        <authorList>
            <person name="Iida R."/>
            <person name="Ueki M."/>
            <person name="Yasuda T."/>
        </authorList>
    </citation>
    <scope>DEVELOPMENTAL STAGE (ISOFORM 3)</scope>
    <scope>INDUCTION BY HEAT SHOCK (ISOFORM 3)</scope>
    <source>
        <tissue>Kidney</tissue>
    </source>
</reference>
<reference key="7">
    <citation type="journal article" date="2010" name="Cell">
        <title>A tissue-specific atlas of mouse protein phosphorylation and expression.</title>
        <authorList>
            <person name="Huttlin E.L."/>
            <person name="Jedrychowski M.P."/>
            <person name="Elias J.E."/>
            <person name="Goswami T."/>
            <person name="Rad R."/>
            <person name="Beausoleil S.A."/>
            <person name="Villen J."/>
            <person name="Haas W."/>
            <person name="Sowa M.E."/>
            <person name="Gygi S.P."/>
        </authorList>
    </citation>
    <scope>IDENTIFICATION BY MASS SPECTROMETRY [LARGE SCALE ANALYSIS]</scope>
    <source>
        <tissue>Kidney</tissue>
    </source>
</reference>
<sequence>MASWWRAFPQAARRYPWPTNVLLYAGLFSAGDALQQRLRGGPADWRQTRRVATLAVTFHGNFNYVWLRLLERALPGRAPRTVLAKVLCDQTVGGPIALSAFYVGMSVLQGKDDIFLDLKQKFWNTYKSGLMYWPFVQLTNFSLVPVHWRTAYTGLCAFLWATFLCFSQQSGDGTLQSIFIFLRRKEASDKSPEK</sequence>
<keyword id="KW-0025">Alternative splicing</keyword>
<keyword id="KW-0963">Cytoplasm</keyword>
<keyword id="KW-0472">Membrane</keyword>
<keyword id="KW-0576">Peroxisome</keyword>
<keyword id="KW-1185">Reference proteome</keyword>
<keyword id="KW-0812">Transmembrane</keyword>
<keyword id="KW-1133">Transmembrane helix</keyword>
<proteinExistence type="evidence at protein level"/>
<organism>
    <name type="scientific">Mus musculus</name>
    <name type="common">Mouse</name>
    <dbReference type="NCBI Taxonomy" id="10090"/>
    <lineage>
        <taxon>Eukaryota</taxon>
        <taxon>Metazoa</taxon>
        <taxon>Chordata</taxon>
        <taxon>Craniata</taxon>
        <taxon>Vertebrata</taxon>
        <taxon>Euteleostomi</taxon>
        <taxon>Mammalia</taxon>
        <taxon>Eutheria</taxon>
        <taxon>Euarchontoglires</taxon>
        <taxon>Glires</taxon>
        <taxon>Rodentia</taxon>
        <taxon>Myomorpha</taxon>
        <taxon>Muroidea</taxon>
        <taxon>Muridae</taxon>
        <taxon>Murinae</taxon>
        <taxon>Mus</taxon>
        <taxon>Mus</taxon>
    </lineage>
</organism>
<feature type="chain" id="PRO_0000333179" description="Mpv17-like protein">
    <location>
        <begin position="1"/>
        <end position="194"/>
    </location>
</feature>
<feature type="topological domain" description="Cytoplasmic" evidence="5">
    <location>
        <begin position="1"/>
        <end position="14"/>
    </location>
</feature>
<feature type="transmembrane region" description="Helical" evidence="2">
    <location>
        <begin position="15"/>
        <end position="34"/>
    </location>
</feature>
<feature type="topological domain" description="Lumenal" evidence="5">
    <location>
        <begin position="35"/>
        <end position="50"/>
    </location>
</feature>
<feature type="transmembrane region" description="Helical" evidence="2">
    <location>
        <begin position="51"/>
        <end position="67"/>
    </location>
</feature>
<feature type="topological domain" description="Cytoplasmic" evidence="5">
    <location>
        <begin position="68"/>
        <end position="91"/>
    </location>
</feature>
<feature type="transmembrane region" description="Helical" evidence="2">
    <location>
        <begin position="92"/>
        <end position="110"/>
    </location>
</feature>
<feature type="topological domain" description="Lumenal" evidence="5">
    <location>
        <begin position="111"/>
        <end position="150"/>
    </location>
</feature>
<feature type="transmembrane region" description="Helical" evidence="2">
    <location>
        <begin position="151"/>
        <end position="168"/>
    </location>
</feature>
<feature type="topological domain" description="Cytoplasmic" evidence="5">
    <location>
        <begin position="169"/>
        <end position="194"/>
    </location>
</feature>
<feature type="region of interest" description="Targeting to peroxisomes">
    <location>
        <begin position="16"/>
        <end position="55"/>
    </location>
</feature>
<feature type="splice variant" id="VSP_033465" description="In isoform 3." evidence="7 8 9">
    <location>
        <begin position="1"/>
        <end position="104"/>
    </location>
</feature>
<feature type="splice variant" id="VSP_033464" description="In isoform 2." evidence="9">
    <location>
        <begin position="1"/>
        <end position="98"/>
    </location>
</feature>
<feature type="splice variant" id="VSP_033466" description="In isoform 2." evidence="9">
    <original>SAFYV</original>
    <variation>MRYPP</variation>
    <location>
        <begin position="99"/>
        <end position="103"/>
    </location>
</feature>
<comment type="function">
    <molecule>Isoform 1</molecule>
    <text evidence="1 4 5">Participates in reactive oxygen species metabolism by up- or down-regulation of the genes of antioxidant enzymes (PubMed:12471025, PubMed:15541722). Protective against the mitochondrial apoptotic cascade (By similarity).</text>
</comment>
<comment type="function">
    <molecule>Isoform 3</molecule>
    <text evidence="4 5">Participates in reactive oxygen species metabolism by up- or down-regulation of the genes of antioxidant enzymes.</text>
</comment>
<comment type="interaction">
    <interactant intactId="EBI-15727135">
        <id>Q99MS3</id>
    </interactant>
    <interactant intactId="EBI-2365838">
        <id>Q9JIY5</id>
        <label>Htra2</label>
    </interactant>
    <organismsDiffer>false</organismsDiffer>
    <experiments>2</experiments>
</comment>
<comment type="interaction">
    <interactant intactId="EBI-15727082">
        <id>Q99MS3-1</id>
    </interactant>
    <interactant intactId="EBI-2365838">
        <id>Q9JIY5</id>
        <label>Htra2</label>
    </interactant>
    <organismsDiffer>false</organismsDiffer>
    <experiments>3</experiments>
</comment>
<comment type="interaction">
    <interactant intactId="EBI-15727109">
        <id>Q99MS3-3</id>
    </interactant>
    <interactant intactId="EBI-2365838">
        <id>Q9JIY5</id>
        <label>Htra2</label>
    </interactant>
    <organismsDiffer>false</organismsDiffer>
    <experiments>2</experiments>
</comment>
<comment type="subcellular location">
    <molecule>Isoform 1</molecule>
    <subcellularLocation>
        <location evidence="4">Peroxisome membrane</location>
        <topology>Multi-pass membrane protein</topology>
    </subcellularLocation>
</comment>
<comment type="subcellular location">
    <molecule>Isoform 3</molecule>
    <subcellularLocation>
        <location evidence="5">Cytoplasm</location>
    </subcellularLocation>
</comment>
<comment type="alternative products">
    <event type="alternative splicing"/>
    <isoform>
        <id>Q99MS3-1</id>
        <name>1</name>
        <name>M-LP long</name>
        <name evidence="10">M-LPL</name>
        <sequence type="displayed"/>
    </isoform>
    <isoform>
        <id>Q99MS3-2</id>
        <name>2</name>
        <sequence type="described" ref="VSP_033464 VSP_033466"/>
    </isoform>
    <isoform>
        <id>Q99MS3-3</id>
        <name>3</name>
        <name>M-LP short</name>
        <name evidence="10">M-LPS</name>
        <sequence type="described" ref="VSP_033465"/>
    </isoform>
</comment>
<comment type="tissue specificity">
    <text evidence="3 4 5">Isoform 1 and isoform 3 are expressed in the kidney (at protein level). Isoform 1 is expressed in the kidney, spleen, heart, brain, lung and liver. Isoform 3 is expressed in the kidney. Isoform 1 and isoform 3 expression increase during development, reache their highest level in adulthood and decrease with aging.</text>
</comment>
<comment type="developmental stage">
    <molecule>Isoform 3</molecule>
    <text evidence="6">Levels increase steadily between 1 week and 6 months after birth and decrease slightly between 6 months and 15 months after birth.</text>
</comment>
<comment type="induction">
    <molecule>Isoform 3</molecule>
    <text evidence="6">By heat shock.</text>
</comment>
<comment type="similarity">
    <text evidence="11">Belongs to the peroxisomal membrane protein PXMP2/4 family.</text>
</comment>
<protein>
    <recommendedName>
        <fullName>Mpv17-like protein</fullName>
        <shortName>M-LP</shortName>
    </recommendedName>
</protein>
<accession>Q99MS3</accession>
<accession>Q3UWD2</accession>
<accession>Q8CI14</accession>
<dbReference type="EMBL" id="AF305634">
    <property type="protein sequence ID" value="AAK32113.2"/>
    <property type="molecule type" value="mRNA"/>
</dbReference>
<dbReference type="EMBL" id="AY513273">
    <property type="protein sequence ID" value="AAS82777.1"/>
    <property type="molecule type" value="mRNA"/>
</dbReference>
<dbReference type="EMBL" id="AK136449">
    <property type="protein sequence ID" value="BAE22983.1"/>
    <property type="molecule type" value="mRNA"/>
</dbReference>
<dbReference type="EMBL" id="AK144372">
    <property type="protein sequence ID" value="BAE25854.1"/>
    <property type="molecule type" value="mRNA"/>
</dbReference>
<dbReference type="EMBL" id="BC094450">
    <property type="protein sequence ID" value="AAH94450.1"/>
    <property type="molecule type" value="mRNA"/>
</dbReference>
<dbReference type="EMBL" id="BC037713">
    <property type="protein sequence ID" value="AAH37713.1"/>
    <property type="molecule type" value="mRNA"/>
</dbReference>
<dbReference type="CCDS" id="CCDS27970.1">
    <molecule id="Q99MS3-1"/>
</dbReference>
<dbReference type="CCDS" id="CCDS79423.1">
    <molecule id="Q99MS3-2"/>
</dbReference>
<dbReference type="CCDS" id="CCDS79426.1">
    <molecule id="Q99MS3-3"/>
</dbReference>
<dbReference type="PIR" id="JC7685">
    <property type="entry name" value="JC7685"/>
</dbReference>
<dbReference type="RefSeq" id="NP_001276491.1">
    <molecule id="Q99MS3-2"/>
    <property type="nucleotide sequence ID" value="NM_001289562.1"/>
</dbReference>
<dbReference type="RefSeq" id="NP_001276492.1">
    <molecule id="Q99MS3-3"/>
    <property type="nucleotide sequence ID" value="NM_001289563.1"/>
</dbReference>
<dbReference type="RefSeq" id="NP_001276494.1">
    <molecule id="Q99MS3-3"/>
    <property type="nucleotide sequence ID" value="NM_001289565.1"/>
</dbReference>
<dbReference type="RefSeq" id="NP_001276496.1">
    <molecule id="Q99MS3-3"/>
    <property type="nucleotide sequence ID" value="NM_001289567.1"/>
</dbReference>
<dbReference type="RefSeq" id="NP_291042.2">
    <molecule id="Q99MS3-1"/>
    <property type="nucleotide sequence ID" value="NM_033564.3"/>
</dbReference>
<dbReference type="RefSeq" id="XP_011244354.1">
    <property type="nucleotide sequence ID" value="XM_011246052.2"/>
</dbReference>
<dbReference type="RefSeq" id="XP_030105202.1">
    <molecule id="Q99MS3-3"/>
    <property type="nucleotide sequence ID" value="XM_030249342.1"/>
</dbReference>
<dbReference type="RefSeq" id="XP_036016083.1">
    <molecule id="Q99MS3-3"/>
    <property type="nucleotide sequence ID" value="XM_036160190.1"/>
</dbReference>
<dbReference type="SMR" id="Q99MS3"/>
<dbReference type="DIP" id="DIP-46298N"/>
<dbReference type="FunCoup" id="Q99MS3">
    <property type="interactions" value="1223"/>
</dbReference>
<dbReference type="IntAct" id="Q99MS3">
    <property type="interactions" value="1"/>
</dbReference>
<dbReference type="STRING" id="10090.ENSMUSP00000023360"/>
<dbReference type="PhosphoSitePlus" id="Q99MS3"/>
<dbReference type="SwissPalm" id="Q99MS3"/>
<dbReference type="jPOST" id="Q99MS3"/>
<dbReference type="PaxDb" id="10090-ENSMUSP00000023360"/>
<dbReference type="ProteomicsDB" id="291390">
    <molecule id="Q99MS3-1"/>
</dbReference>
<dbReference type="ProteomicsDB" id="291391">
    <molecule id="Q99MS3-2"/>
</dbReference>
<dbReference type="ProteomicsDB" id="291392">
    <molecule id="Q99MS3-3"/>
</dbReference>
<dbReference type="DNASU" id="93734"/>
<dbReference type="Ensembl" id="ENSMUST00000023360.14">
    <molecule id="Q99MS3-1"/>
    <property type="protein sequence ID" value="ENSMUSP00000023360.8"/>
    <property type="gene ID" value="ENSMUSG00000022679.14"/>
</dbReference>
<dbReference type="Ensembl" id="ENSMUST00000124947.8">
    <molecule id="Q99MS3-3"/>
    <property type="protein sequence ID" value="ENSMUSP00000117826.3"/>
    <property type="gene ID" value="ENSMUSG00000022679.14"/>
</dbReference>
<dbReference type="Ensembl" id="ENSMUST00000128757.8">
    <molecule id="Q99MS3-2"/>
    <property type="protein sequence ID" value="ENSMUSP00000120169.2"/>
    <property type="gene ID" value="ENSMUSG00000022679.14"/>
</dbReference>
<dbReference type="GeneID" id="93734"/>
<dbReference type="KEGG" id="mmu:93734"/>
<dbReference type="UCSC" id="uc007ygo.2">
    <molecule id="Q99MS3-2"/>
    <property type="organism name" value="mouse"/>
</dbReference>
<dbReference type="UCSC" id="uc007ygp.2">
    <molecule id="Q99MS3-3"/>
    <property type="organism name" value="mouse"/>
</dbReference>
<dbReference type="UCSC" id="uc007ygr.2">
    <molecule id="Q99MS3-1"/>
    <property type="organism name" value="mouse"/>
</dbReference>
<dbReference type="AGR" id="MGI:2135951"/>
<dbReference type="CTD" id="255027"/>
<dbReference type="MGI" id="MGI:2135951">
    <property type="gene designation" value="Mpv17l"/>
</dbReference>
<dbReference type="VEuPathDB" id="HostDB:ENSMUSG00000022679"/>
<dbReference type="eggNOG" id="KOG1944">
    <property type="taxonomic scope" value="Eukaryota"/>
</dbReference>
<dbReference type="GeneTree" id="ENSGT00730000111088"/>
<dbReference type="HOGENOM" id="CLU_164445_0_0_1"/>
<dbReference type="InParanoid" id="Q99MS3"/>
<dbReference type="OMA" id="AGWWRVL"/>
<dbReference type="OrthoDB" id="5345392at2759"/>
<dbReference type="PhylomeDB" id="Q99MS3"/>
<dbReference type="TreeFam" id="TF324392"/>
<dbReference type="BioGRID-ORCS" id="93734">
    <property type="hits" value="3 hits in 76 CRISPR screens"/>
</dbReference>
<dbReference type="PRO" id="PR:Q99MS3"/>
<dbReference type="Proteomes" id="UP000000589">
    <property type="component" value="Chromosome 16"/>
</dbReference>
<dbReference type="RNAct" id="Q99MS3">
    <property type="molecule type" value="protein"/>
</dbReference>
<dbReference type="Bgee" id="ENSMUSG00000022679">
    <property type="expression patterns" value="Expressed in right kidney and 248 other cell types or tissues"/>
</dbReference>
<dbReference type="ExpressionAtlas" id="Q99MS3">
    <property type="expression patterns" value="baseline and differential"/>
</dbReference>
<dbReference type="GO" id="GO:0005739">
    <property type="term" value="C:mitochondrion"/>
    <property type="evidence" value="ECO:0007005"/>
    <property type="project" value="MGI"/>
</dbReference>
<dbReference type="GO" id="GO:0005778">
    <property type="term" value="C:peroxisomal membrane"/>
    <property type="evidence" value="ECO:0007669"/>
    <property type="project" value="UniProtKB-SubCell"/>
</dbReference>
<dbReference type="GO" id="GO:0005777">
    <property type="term" value="C:peroxisome"/>
    <property type="evidence" value="ECO:0000250"/>
    <property type="project" value="UniProtKB"/>
</dbReference>
<dbReference type="GO" id="GO:0010730">
    <property type="term" value="P:negative regulation of hydrogen peroxide biosynthetic process"/>
    <property type="evidence" value="ECO:0007669"/>
    <property type="project" value="Ensembl"/>
</dbReference>
<dbReference type="GO" id="GO:1901029">
    <property type="term" value="P:negative regulation of mitochondrial outer membrane permeabilization involved in apoptotic signaling pathway"/>
    <property type="evidence" value="ECO:0007669"/>
    <property type="project" value="Ensembl"/>
</dbReference>
<dbReference type="GO" id="GO:0072593">
    <property type="term" value="P:reactive oxygen species metabolic process"/>
    <property type="evidence" value="ECO:0000250"/>
    <property type="project" value="UniProtKB"/>
</dbReference>
<dbReference type="InterPro" id="IPR007248">
    <property type="entry name" value="Mpv17_PMP22"/>
</dbReference>
<dbReference type="PANTHER" id="PTHR11266:SF39">
    <property type="entry name" value="MPV17-LIKE PROTEIN"/>
    <property type="match status" value="1"/>
</dbReference>
<dbReference type="PANTHER" id="PTHR11266">
    <property type="entry name" value="PEROXISOMAL MEMBRANE PROTEIN 2, PXMP2 MPV17"/>
    <property type="match status" value="1"/>
</dbReference>
<dbReference type="Pfam" id="PF04117">
    <property type="entry name" value="Mpv17_PMP22"/>
    <property type="match status" value="1"/>
</dbReference>
<gene>
    <name type="primary">Mpv17l</name>
</gene>
<evidence type="ECO:0000250" key="1">
    <source>
        <dbReference type="UniProtKB" id="Q2QL34"/>
    </source>
</evidence>
<evidence type="ECO:0000255" key="2"/>
<evidence type="ECO:0000269" key="3">
    <source>
    </source>
</evidence>
<evidence type="ECO:0000269" key="4">
    <source>
    </source>
</evidence>
<evidence type="ECO:0000269" key="5">
    <source>
    </source>
</evidence>
<evidence type="ECO:0000269" key="6">
    <source>
    </source>
</evidence>
<evidence type="ECO:0000303" key="7">
    <source>
    </source>
</evidence>
<evidence type="ECO:0000303" key="8">
    <source>
    </source>
</evidence>
<evidence type="ECO:0000303" key="9">
    <source>
    </source>
</evidence>
<evidence type="ECO:0000303" key="10">
    <source>
    </source>
</evidence>
<evidence type="ECO:0000305" key="11"/>